<accession>Q24MN8</accession>
<reference key="1">
    <citation type="journal article" date="2006" name="J. Bacteriol.">
        <title>Complete genome sequence of the dehalorespiring bacterium Desulfitobacterium hafniense Y51 and comparison with Dehalococcoides ethenogenes 195.</title>
        <authorList>
            <person name="Nonaka H."/>
            <person name="Keresztes G."/>
            <person name="Shinoda Y."/>
            <person name="Ikenaga Y."/>
            <person name="Abe M."/>
            <person name="Naito K."/>
            <person name="Inatomi K."/>
            <person name="Furukawa K."/>
            <person name="Inui M."/>
            <person name="Yukawa H."/>
        </authorList>
    </citation>
    <scope>NUCLEOTIDE SEQUENCE [LARGE SCALE GENOMIC DNA]</scope>
    <source>
        <strain>Y51</strain>
    </source>
</reference>
<organism>
    <name type="scientific">Desulfitobacterium hafniense (strain Y51)</name>
    <dbReference type="NCBI Taxonomy" id="138119"/>
    <lineage>
        <taxon>Bacteria</taxon>
        <taxon>Bacillati</taxon>
        <taxon>Bacillota</taxon>
        <taxon>Clostridia</taxon>
        <taxon>Eubacteriales</taxon>
        <taxon>Desulfitobacteriaceae</taxon>
        <taxon>Desulfitobacterium</taxon>
    </lineage>
</organism>
<evidence type="ECO:0000255" key="1">
    <source>
        <dbReference type="HAMAP-Rule" id="MF_01416"/>
    </source>
</evidence>
<sequence>MLKGAIAQRYAQALFELAVQENLDGIEAELQELVQCVEQNAEVAHVLYHPHISLSEKKDLMNKIFAGELSVTVRNFLNLLIDRRRQNYLMEIARVFAHLADEARNIVEAKVASAIPLSETQEQRLHQELARMTGKNVRMVKEVRPELIGGVMIQIGDRVMDGTVAFKLQRIRQSLSHA</sequence>
<gene>
    <name evidence="1" type="primary">atpH</name>
    <name type="ordered locus">DSY4915</name>
</gene>
<protein>
    <recommendedName>
        <fullName evidence="1">ATP synthase subunit delta</fullName>
    </recommendedName>
    <alternativeName>
        <fullName evidence="1">ATP synthase F(1) sector subunit delta</fullName>
    </alternativeName>
    <alternativeName>
        <fullName evidence="1">F-type ATPase subunit delta</fullName>
        <shortName evidence="1">F-ATPase subunit delta</shortName>
    </alternativeName>
</protein>
<dbReference type="EMBL" id="AP008230">
    <property type="protein sequence ID" value="BAE86704.1"/>
    <property type="molecule type" value="Genomic_DNA"/>
</dbReference>
<dbReference type="SMR" id="Q24MN8"/>
<dbReference type="STRING" id="138119.DSY4915"/>
<dbReference type="KEGG" id="dsy:DSY4915"/>
<dbReference type="eggNOG" id="COG0712">
    <property type="taxonomic scope" value="Bacteria"/>
</dbReference>
<dbReference type="HOGENOM" id="CLU_085114_1_1_9"/>
<dbReference type="Proteomes" id="UP000001946">
    <property type="component" value="Chromosome"/>
</dbReference>
<dbReference type="GO" id="GO:0005886">
    <property type="term" value="C:plasma membrane"/>
    <property type="evidence" value="ECO:0007669"/>
    <property type="project" value="UniProtKB-SubCell"/>
</dbReference>
<dbReference type="GO" id="GO:0045259">
    <property type="term" value="C:proton-transporting ATP synthase complex"/>
    <property type="evidence" value="ECO:0007669"/>
    <property type="project" value="UniProtKB-KW"/>
</dbReference>
<dbReference type="GO" id="GO:0046933">
    <property type="term" value="F:proton-transporting ATP synthase activity, rotational mechanism"/>
    <property type="evidence" value="ECO:0007669"/>
    <property type="project" value="UniProtKB-UniRule"/>
</dbReference>
<dbReference type="Gene3D" id="1.10.520.20">
    <property type="entry name" value="N-terminal domain of the delta subunit of the F1F0-ATP synthase"/>
    <property type="match status" value="1"/>
</dbReference>
<dbReference type="HAMAP" id="MF_01416">
    <property type="entry name" value="ATP_synth_delta_bact"/>
    <property type="match status" value="1"/>
</dbReference>
<dbReference type="InterPro" id="IPR026015">
    <property type="entry name" value="ATP_synth_OSCP/delta_N_sf"/>
</dbReference>
<dbReference type="InterPro" id="IPR000711">
    <property type="entry name" value="ATPase_OSCP/dsu"/>
</dbReference>
<dbReference type="NCBIfam" id="TIGR01145">
    <property type="entry name" value="ATP_synt_delta"/>
    <property type="match status" value="1"/>
</dbReference>
<dbReference type="NCBIfam" id="NF004402">
    <property type="entry name" value="PRK05758.2-2"/>
    <property type="match status" value="1"/>
</dbReference>
<dbReference type="NCBIfam" id="NF004403">
    <property type="entry name" value="PRK05758.2-4"/>
    <property type="match status" value="1"/>
</dbReference>
<dbReference type="PANTHER" id="PTHR11910">
    <property type="entry name" value="ATP SYNTHASE DELTA CHAIN"/>
    <property type="match status" value="1"/>
</dbReference>
<dbReference type="Pfam" id="PF00213">
    <property type="entry name" value="OSCP"/>
    <property type="match status" value="1"/>
</dbReference>
<dbReference type="PRINTS" id="PR00125">
    <property type="entry name" value="ATPASEDELTA"/>
</dbReference>
<dbReference type="SUPFAM" id="SSF47928">
    <property type="entry name" value="N-terminal domain of the delta subunit of the F1F0-ATP synthase"/>
    <property type="match status" value="1"/>
</dbReference>
<name>ATPD_DESHY</name>
<keyword id="KW-0066">ATP synthesis</keyword>
<keyword id="KW-1003">Cell membrane</keyword>
<keyword id="KW-0139">CF(1)</keyword>
<keyword id="KW-0375">Hydrogen ion transport</keyword>
<keyword id="KW-0406">Ion transport</keyword>
<keyword id="KW-0472">Membrane</keyword>
<keyword id="KW-1185">Reference proteome</keyword>
<keyword id="KW-0813">Transport</keyword>
<proteinExistence type="inferred from homology"/>
<feature type="chain" id="PRO_0000370963" description="ATP synthase subunit delta">
    <location>
        <begin position="1"/>
        <end position="178"/>
    </location>
</feature>
<comment type="function">
    <text evidence="1">F(1)F(0) ATP synthase produces ATP from ADP in the presence of a proton or sodium gradient. F-type ATPases consist of two structural domains, F(1) containing the extramembraneous catalytic core and F(0) containing the membrane proton channel, linked together by a central stalk and a peripheral stalk. During catalysis, ATP synthesis in the catalytic domain of F(1) is coupled via a rotary mechanism of the central stalk subunits to proton translocation.</text>
</comment>
<comment type="function">
    <text evidence="1">This protein is part of the stalk that links CF(0) to CF(1). It either transmits conformational changes from CF(0) to CF(1) or is implicated in proton conduction.</text>
</comment>
<comment type="subunit">
    <text evidence="1">F-type ATPases have 2 components, F(1) - the catalytic core - and F(0) - the membrane proton channel. F(1) has five subunits: alpha(3), beta(3), gamma(1), delta(1), epsilon(1). F(0) has three main subunits: a(1), b(2) and c(10-14). The alpha and beta chains form an alternating ring which encloses part of the gamma chain. F(1) is attached to F(0) by a central stalk formed by the gamma and epsilon chains, while a peripheral stalk is formed by the delta and b chains.</text>
</comment>
<comment type="subcellular location">
    <subcellularLocation>
        <location evidence="1">Cell membrane</location>
        <topology evidence="1">Peripheral membrane protein</topology>
    </subcellularLocation>
</comment>
<comment type="similarity">
    <text evidence="1">Belongs to the ATPase delta chain family.</text>
</comment>